<sequence>MRFHTLLFLSFLLLVSCALICTAQHPGLKKSGMFHENVGKGQHIEKKRSCIERMQTCEVEAGLPCCSGAPCICPYIGDCICIQ</sequence>
<accession>B1P1H4</accession>
<comment type="function">
    <text evidence="4">Inhibits TTX-sensitive sodium currents in rat dorsal root ganglion (DRG) neurons.</text>
</comment>
<comment type="subcellular location">
    <subcellularLocation>
        <location>Secreted</location>
    </subcellularLocation>
</comment>
<comment type="tissue specificity">
    <text>Expressed by the venom gland.</text>
</comment>
<comment type="domain">
    <text evidence="1">The presence of a 'disulfide through disulfide knot' structurally defines this protein as a knottin.</text>
</comment>
<comment type="mass spectrometry">
    <text>Monoisotopic mass.</text>
</comment>
<comment type="similarity">
    <text>Belongs to the neurotoxin 07 (Beta/delta-agtx) family. 03 (aga-4) subfamily. JZTX sub-subfamily.</text>
</comment>
<feature type="signal peptide" evidence="2">
    <location>
        <begin position="1"/>
        <end position="23"/>
    </location>
</feature>
<feature type="propeptide" id="PRO_0000398522" evidence="3">
    <location>
        <begin position="24"/>
        <end position="48"/>
    </location>
</feature>
<feature type="peptide" id="PRO_0000398523" description="U25-theraphotoxin-Cg1a">
    <location>
        <begin position="49"/>
        <end position="83"/>
    </location>
</feature>
<feature type="disulfide bond" evidence="1">
    <location>
        <begin position="50"/>
        <end position="66"/>
    </location>
</feature>
<feature type="disulfide bond" evidence="1">
    <location>
        <begin position="57"/>
        <end position="71"/>
    </location>
</feature>
<feature type="disulfide bond" evidence="1">
    <location>
        <begin position="65"/>
        <end position="81"/>
    </location>
</feature>
<organism>
    <name type="scientific">Chilobrachys guangxiensis</name>
    <name type="common">Chinese earth tiger tarantula</name>
    <name type="synonym">Chilobrachys jingzhao</name>
    <dbReference type="NCBI Taxonomy" id="278060"/>
    <lineage>
        <taxon>Eukaryota</taxon>
        <taxon>Metazoa</taxon>
        <taxon>Ecdysozoa</taxon>
        <taxon>Arthropoda</taxon>
        <taxon>Chelicerata</taxon>
        <taxon>Arachnida</taxon>
        <taxon>Araneae</taxon>
        <taxon>Mygalomorphae</taxon>
        <taxon>Theraphosidae</taxon>
        <taxon>Chilobrachys</taxon>
    </lineage>
</organism>
<reference key="1">
    <citation type="journal article" date="2008" name="Cell. Mol. Life Sci.">
        <title>Molecular diversity and evolution of cystine knot toxins of the tarantula Chilobrachys jingzhao.</title>
        <authorList>
            <person name="Chen J."/>
            <person name="Deng M."/>
            <person name="He Q."/>
            <person name="Meng E."/>
            <person name="Jiang L."/>
            <person name="Liao Z."/>
            <person name="Rong M."/>
            <person name="Liang S."/>
        </authorList>
    </citation>
    <scope>NUCLEOTIDE SEQUENCE [LARGE SCALE MRNA]</scope>
    <scope>TOXIN TARGET</scope>
    <scope>FUNCTION</scope>
    <source>
        <tissue>Venom gland</tissue>
    </source>
</reference>
<reference key="2">
    <citation type="journal article" date="2007" name="Proteomics">
        <title>Proteomic and peptidomic analysis of the venom from Chinese tarantula Chilobrachys jingzhao.</title>
        <authorList>
            <person name="Liao Z."/>
            <person name="Cao J."/>
            <person name="Li S."/>
            <person name="Yan X."/>
            <person name="Hu W."/>
            <person name="He Q."/>
            <person name="Chen J."/>
            <person name="Tang J."/>
            <person name="Xie J."/>
            <person name="Liang S."/>
        </authorList>
    </citation>
    <scope>PROTEIN SEQUENCE OF 49-83</scope>
    <scope>MASS SPECTROMETRY</scope>
    <source>
        <tissue>Venom</tissue>
    </source>
</reference>
<protein>
    <recommendedName>
        <fullName>U25-theraphotoxin-Cg1a</fullName>
        <shortName>U25-TRTX-Cg1a</shortName>
    </recommendedName>
    <alternativeName>
        <fullName>Jingzhaotoxin-54.2</fullName>
        <shortName>JZTX-54.2</shortName>
    </alternativeName>
    <alternativeName>
        <fullName>Peptide F1-20.74</fullName>
    </alternativeName>
</protein>
<proteinExistence type="evidence at protein level"/>
<evidence type="ECO:0000250" key="1"/>
<evidence type="ECO:0000255" key="2"/>
<evidence type="ECO:0000269" key="3">
    <source>
    </source>
</evidence>
<evidence type="ECO:0000269" key="4">
    <source>
    </source>
</evidence>
<name>JZ54B_CHIGU</name>
<dbReference type="EMBL" id="EU233905">
    <property type="protein sequence ID" value="ABY71724.1"/>
    <property type="molecule type" value="mRNA"/>
</dbReference>
<dbReference type="SMR" id="B1P1H4"/>
<dbReference type="ArachnoServer" id="AS000852">
    <property type="toxin name" value="U25-theraphotoxin-Cg1a"/>
</dbReference>
<dbReference type="GO" id="GO:0005576">
    <property type="term" value="C:extracellular region"/>
    <property type="evidence" value="ECO:0007669"/>
    <property type="project" value="UniProtKB-SubCell"/>
</dbReference>
<dbReference type="GO" id="GO:0099106">
    <property type="term" value="F:ion channel regulator activity"/>
    <property type="evidence" value="ECO:0007669"/>
    <property type="project" value="UniProtKB-KW"/>
</dbReference>
<dbReference type="GO" id="GO:0090729">
    <property type="term" value="F:toxin activity"/>
    <property type="evidence" value="ECO:0007669"/>
    <property type="project" value="UniProtKB-KW"/>
</dbReference>
<keyword id="KW-0903">Direct protein sequencing</keyword>
<keyword id="KW-1015">Disulfide bond</keyword>
<keyword id="KW-0872">Ion channel impairing toxin</keyword>
<keyword id="KW-0960">Knottin</keyword>
<keyword id="KW-0964">Secreted</keyword>
<keyword id="KW-0732">Signal</keyword>
<keyword id="KW-0800">Toxin</keyword>